<sequence length="867" mass="96430">MVAAAAADALAAGGDSSSPSDLYNKITGQQSSTTTSLSYAACDVITRHLISMLLEISNWTNDLAKYLAGSEQSSDDGHNERCLLFSSIFFAIDPSLALAQMSSVASKHALLIALGGFSIAALFVWYINKKDKDGRKKKKVGDVISNGLPKTATASDVQTENGNVKKANGHVNGDVQSSIGVSQKQQQKDEDEKTQKKDAVQNEKPSIDKKQPKSQAPTEKKEEKTVEIHTETEETDHVAAGDSGVVSEHKEHDKKTKQKNDEPVSIDKKSEEIEVPKQAGVVNEEPKKQSEETVVEEQFVKKEEPKLKSAPTPLLTMPSKKKVLENEQIPEEPTPTKMNDATSPLSLDIAAQMSPASFSWSEEMEKSFNEEEFRLNESSDIDRSPASPLRHLQQQHNKNRSSQKRKGGRVNGRDGVHQPQQQHQQQKKEEQGQIKKGQRRLTKEKSVEETPEKSQKRVVLKHHENEAGDAAHAQIIESPHHENASYEKSDSPGLDSQNSEASSQDSGRATGPLASPHEDGLTTEDDFLPMYEFEIPNSLVGLIIGVKGKTIKELSVRTNVRMLIRQHHETDKVKTHQICQVRGKRDEINHCLQMLRRRFPPARFPELNLQPVVPPVLPNSNFDMLSTQPTWLTLPEDIKCEVAVSSIISASHFFIQQPTHPSFASLRHLDMYMGSLYGEQSNLPELPIPCQNGLLCAAPVGNAWFRAVTVQYFDETDEVFVKFVDYGGYSKMARQDLRQIRTDLMSLPFQSTEVMLAHVRPVDGTTNWSDAAMQKFRAMCIGKVINCKMVGQSHDTRIPMVELYMMSKDGKDAQEVRFDQVLMNCGLARTADPSKMSRITVPAALDTESRMKRPSFSSQTSQTAVVC</sequence>
<name>AKAP1_CAEEL</name>
<protein>
    <recommendedName>
        <fullName evidence="5">KH domain-containing protein akap-1</fullName>
    </recommendedName>
</protein>
<evidence type="ECO:0000255" key="1"/>
<evidence type="ECO:0000255" key="2">
    <source>
        <dbReference type="PROSITE-ProRule" id="PRU00117"/>
    </source>
</evidence>
<evidence type="ECO:0000255" key="3">
    <source>
        <dbReference type="PROSITE-ProRule" id="PRU00211"/>
    </source>
</evidence>
<evidence type="ECO:0000256" key="4">
    <source>
        <dbReference type="SAM" id="MobiDB-lite"/>
    </source>
</evidence>
<evidence type="ECO:0000305" key="5"/>
<evidence type="ECO:0000312" key="6">
    <source>
        <dbReference type="WormBase" id="C56G2.1a"/>
    </source>
</evidence>
<reference key="1">
    <citation type="journal article" date="1998" name="Science">
        <title>Genome sequence of the nematode C. elegans: a platform for investigating biology.</title>
        <authorList>
            <consortium name="The C. elegans sequencing consortium"/>
        </authorList>
    </citation>
    <scope>NUCLEOTIDE SEQUENCE [LARGE SCALE GENOMIC DNA]</scope>
    <scope>ALTERNATIVE SPLICING</scope>
    <source>
        <strain>Bristol N2</strain>
    </source>
</reference>
<organism>
    <name type="scientific">Caenorhabditis elegans</name>
    <dbReference type="NCBI Taxonomy" id="6239"/>
    <lineage>
        <taxon>Eukaryota</taxon>
        <taxon>Metazoa</taxon>
        <taxon>Ecdysozoa</taxon>
        <taxon>Nematoda</taxon>
        <taxon>Chromadorea</taxon>
        <taxon>Rhabditida</taxon>
        <taxon>Rhabditina</taxon>
        <taxon>Rhabditomorpha</taxon>
        <taxon>Rhabditoidea</taxon>
        <taxon>Rhabditidae</taxon>
        <taxon>Peloderinae</taxon>
        <taxon>Caenorhabditis</taxon>
    </lineage>
</organism>
<keyword id="KW-0025">Alternative splicing</keyword>
<keyword id="KW-0472">Membrane</keyword>
<keyword id="KW-1185">Reference proteome</keyword>
<keyword id="KW-0694">RNA-binding</keyword>
<keyword id="KW-0812">Transmembrane</keyword>
<keyword id="KW-1133">Transmembrane helix</keyword>
<comment type="subcellular location">
    <subcellularLocation>
        <location evidence="1">Membrane</location>
        <topology evidence="1">Single-pass membrane protein</topology>
    </subcellularLocation>
</comment>
<comment type="alternative products">
    <event type="alternative splicing"/>
    <isoform>
        <id>Q09285-1</id>
        <name>a</name>
        <sequence type="displayed"/>
    </isoform>
    <isoform>
        <id>Q09285-2</id>
        <name>b</name>
        <sequence type="described" ref="VSP_002856 VSP_002857"/>
    </isoform>
</comment>
<accession>Q09285</accession>
<accession>Q09286</accession>
<proteinExistence type="inferred from homology"/>
<gene>
    <name evidence="6" type="primary">akap-1</name>
    <name evidence="6" type="ORF">C56G2.1</name>
</gene>
<dbReference type="EMBL" id="FO080744">
    <property type="protein sequence ID" value="CCD66341.1"/>
    <property type="molecule type" value="Genomic_DNA"/>
</dbReference>
<dbReference type="EMBL" id="FO080744">
    <property type="protein sequence ID" value="CCD66342.1"/>
    <property type="molecule type" value="Genomic_DNA"/>
</dbReference>
<dbReference type="RefSeq" id="NP_001370528.1">
    <molecule id="Q09285-1"/>
    <property type="nucleotide sequence ID" value="NM_001382893.2"/>
</dbReference>
<dbReference type="RefSeq" id="NP_741190.1">
    <property type="nucleotide sequence ID" value="NM_171163.5"/>
</dbReference>
<dbReference type="RefSeq" id="NP_741191.1">
    <molecule id="Q09285-2"/>
    <property type="nucleotide sequence ID" value="NM_171164.7"/>
</dbReference>
<dbReference type="SMR" id="Q09285"/>
<dbReference type="BioGRID" id="41116">
    <property type="interactions" value="2"/>
</dbReference>
<dbReference type="FunCoup" id="Q09285">
    <property type="interactions" value="1"/>
</dbReference>
<dbReference type="STRING" id="6239.C56G2.1a.1"/>
<dbReference type="iPTMnet" id="Q09285"/>
<dbReference type="PaxDb" id="6239-C56G2.1a"/>
<dbReference type="PeptideAtlas" id="Q09285"/>
<dbReference type="EnsemblMetazoa" id="C56G2.1a.1">
    <molecule id="Q09285-1"/>
    <property type="protein sequence ID" value="C56G2.1a.1"/>
    <property type="gene ID" value="WBGene00016977"/>
</dbReference>
<dbReference type="EnsemblMetazoa" id="C56G2.1b.1">
    <molecule id="Q09285-2"/>
    <property type="protein sequence ID" value="C56G2.1b.1"/>
    <property type="gene ID" value="WBGene00016977"/>
</dbReference>
<dbReference type="GeneID" id="175898"/>
<dbReference type="KEGG" id="cel:CELE_C56G2.1"/>
<dbReference type="AGR" id="WB:WBGene00016977"/>
<dbReference type="CTD" id="175898"/>
<dbReference type="WormBase" id="C56G2.1a">
    <molecule id="Q09285-1"/>
    <property type="protein sequence ID" value="CE24866"/>
    <property type="gene ID" value="WBGene00016977"/>
    <property type="gene designation" value="akap-1"/>
</dbReference>
<dbReference type="WormBase" id="C56G2.1b">
    <molecule id="Q09285-2"/>
    <property type="protein sequence ID" value="CE30637"/>
    <property type="gene ID" value="WBGene00016977"/>
    <property type="gene designation" value="akap-1"/>
</dbReference>
<dbReference type="eggNOG" id="KOG2279">
    <property type="taxonomic scope" value="Eukaryota"/>
</dbReference>
<dbReference type="GeneTree" id="ENSGT00390000001360"/>
<dbReference type="HOGENOM" id="CLU_330699_0_0_1"/>
<dbReference type="InParanoid" id="Q09285"/>
<dbReference type="OMA" id="MIIRPHH"/>
<dbReference type="OrthoDB" id="10069557at2759"/>
<dbReference type="Reactome" id="R-CEL-983231">
    <property type="pathway name" value="Factors involved in megakaryocyte development and platelet production"/>
</dbReference>
<dbReference type="PRO" id="PR:Q09285"/>
<dbReference type="Proteomes" id="UP000001940">
    <property type="component" value="Chromosome III"/>
</dbReference>
<dbReference type="Bgee" id="WBGene00016977">
    <property type="expression patterns" value="Expressed in larva and 5 other cell types or tissues"/>
</dbReference>
<dbReference type="ExpressionAtlas" id="Q09285">
    <property type="expression patterns" value="baseline and differential"/>
</dbReference>
<dbReference type="GO" id="GO:0016020">
    <property type="term" value="C:membrane"/>
    <property type="evidence" value="ECO:0007669"/>
    <property type="project" value="UniProtKB-SubCell"/>
</dbReference>
<dbReference type="GO" id="GO:0005739">
    <property type="term" value="C:mitochondrion"/>
    <property type="evidence" value="ECO:0007669"/>
    <property type="project" value="UniProtKB-ARBA"/>
</dbReference>
<dbReference type="GO" id="GO:0003723">
    <property type="term" value="F:RNA binding"/>
    <property type="evidence" value="ECO:0007669"/>
    <property type="project" value="UniProtKB-KW"/>
</dbReference>
<dbReference type="CDD" id="cd22395">
    <property type="entry name" value="KH-I_AKAP1"/>
    <property type="match status" value="1"/>
</dbReference>
<dbReference type="CDD" id="cd20407">
    <property type="entry name" value="Tudor_AKAP1"/>
    <property type="match status" value="1"/>
</dbReference>
<dbReference type="Gene3D" id="2.30.30.140">
    <property type="match status" value="1"/>
</dbReference>
<dbReference type="Gene3D" id="2.40.50.90">
    <property type="match status" value="1"/>
</dbReference>
<dbReference type="Gene3D" id="3.30.1370.10">
    <property type="entry name" value="K Homology domain, type 1"/>
    <property type="match status" value="1"/>
</dbReference>
<dbReference type="InterPro" id="IPR047368">
    <property type="entry name" value="KH-I_AKAP1"/>
</dbReference>
<dbReference type="InterPro" id="IPR004087">
    <property type="entry name" value="KH_dom"/>
</dbReference>
<dbReference type="InterPro" id="IPR004088">
    <property type="entry name" value="KH_dom_type_1"/>
</dbReference>
<dbReference type="InterPro" id="IPR036612">
    <property type="entry name" value="KH_dom_type_1_sf"/>
</dbReference>
<dbReference type="InterPro" id="IPR035437">
    <property type="entry name" value="SNase_OB-fold_sf"/>
</dbReference>
<dbReference type="InterPro" id="IPR002999">
    <property type="entry name" value="Tudor"/>
</dbReference>
<dbReference type="InterPro" id="IPR047367">
    <property type="entry name" value="Tudor_AKAP1"/>
</dbReference>
<dbReference type="InterPro" id="IPR050621">
    <property type="entry name" value="Tudor_domain_containing"/>
</dbReference>
<dbReference type="PANTHER" id="PTHR22948:SF65">
    <property type="entry name" value="A-KINASE ANCHORING PROTEIN 1"/>
    <property type="match status" value="1"/>
</dbReference>
<dbReference type="PANTHER" id="PTHR22948">
    <property type="entry name" value="TUDOR DOMAIN CONTAINING PROTEIN"/>
    <property type="match status" value="1"/>
</dbReference>
<dbReference type="Pfam" id="PF00013">
    <property type="entry name" value="KH_1"/>
    <property type="match status" value="1"/>
</dbReference>
<dbReference type="Pfam" id="PF00567">
    <property type="entry name" value="TUDOR"/>
    <property type="match status" value="1"/>
</dbReference>
<dbReference type="SMART" id="SM00322">
    <property type="entry name" value="KH"/>
    <property type="match status" value="1"/>
</dbReference>
<dbReference type="SMART" id="SM00333">
    <property type="entry name" value="TUDOR"/>
    <property type="match status" value="1"/>
</dbReference>
<dbReference type="SUPFAM" id="SSF54791">
    <property type="entry name" value="Eukaryotic type KH-domain (KH-domain type I)"/>
    <property type="match status" value="1"/>
</dbReference>
<dbReference type="SUPFAM" id="SSF63748">
    <property type="entry name" value="Tudor/PWWP/MBT"/>
    <property type="match status" value="1"/>
</dbReference>
<dbReference type="PROSITE" id="PS50084">
    <property type="entry name" value="KH_TYPE_1"/>
    <property type="match status" value="1"/>
</dbReference>
<dbReference type="PROSITE" id="PS50304">
    <property type="entry name" value="TUDOR"/>
    <property type="match status" value="1"/>
</dbReference>
<feature type="chain" id="PRO_0000050163" description="KH domain-containing protein akap-1" evidence="5">
    <location>
        <begin position="1"/>
        <end position="867"/>
    </location>
</feature>
<feature type="transmembrane region" description="Helical" evidence="1">
    <location>
        <begin position="108"/>
        <end position="128"/>
    </location>
</feature>
<feature type="domain" description="KH" evidence="2">
    <location>
        <begin position="528"/>
        <end position="595"/>
    </location>
</feature>
<feature type="domain" description="Tudor" evidence="3">
    <location>
        <begin position="689"/>
        <end position="747"/>
    </location>
</feature>
<feature type="region of interest" description="Disordered" evidence="4">
    <location>
        <begin position="145"/>
        <end position="458"/>
    </location>
</feature>
<feature type="region of interest" description="Disordered" evidence="4">
    <location>
        <begin position="481"/>
        <end position="523"/>
    </location>
</feature>
<feature type="compositionally biased region" description="Polar residues" evidence="4">
    <location>
        <begin position="152"/>
        <end position="162"/>
    </location>
</feature>
<feature type="compositionally biased region" description="Basic and acidic residues" evidence="4">
    <location>
        <begin position="186"/>
        <end position="211"/>
    </location>
</feature>
<feature type="compositionally biased region" description="Basic and acidic residues" evidence="4">
    <location>
        <begin position="218"/>
        <end position="239"/>
    </location>
</feature>
<feature type="compositionally biased region" description="Basic and acidic residues" evidence="4">
    <location>
        <begin position="247"/>
        <end position="275"/>
    </location>
</feature>
<feature type="compositionally biased region" description="Basic and acidic residues" evidence="4">
    <location>
        <begin position="298"/>
        <end position="307"/>
    </location>
</feature>
<feature type="compositionally biased region" description="Polar residues" evidence="4">
    <location>
        <begin position="336"/>
        <end position="345"/>
    </location>
</feature>
<feature type="compositionally biased region" description="Basic and acidic residues" evidence="4">
    <location>
        <begin position="363"/>
        <end position="383"/>
    </location>
</feature>
<feature type="compositionally biased region" description="Basic residues" evidence="4">
    <location>
        <begin position="397"/>
        <end position="408"/>
    </location>
</feature>
<feature type="compositionally biased region" description="Basic and acidic residues" evidence="4">
    <location>
        <begin position="441"/>
        <end position="458"/>
    </location>
</feature>
<feature type="compositionally biased region" description="Basic and acidic residues" evidence="4">
    <location>
        <begin position="481"/>
        <end position="490"/>
    </location>
</feature>
<feature type="compositionally biased region" description="Polar residues" evidence="4">
    <location>
        <begin position="494"/>
        <end position="507"/>
    </location>
</feature>
<feature type="splice variant" id="VSP_002856" description="In isoform b." evidence="5">
    <location>
        <begin position="1"/>
        <end position="458"/>
    </location>
</feature>
<feature type="splice variant" id="VSP_002857" description="In isoform b." evidence="5">
    <original>VLKHHENEAGDAAHAQIIESPHHENASYEKSDSPGLDSQNSE</original>
    <variation>MKVYAKVQEEVKTRRLRKNSTTSSGYGYSVPMTPNTEILFDT</variation>
    <location>
        <begin position="459"/>
        <end position="500"/>
    </location>
</feature>